<accession>Q2KHK6</accession>
<accession>Q2KHK8</accession>
<accession>Q8CC94</accession>
<keyword id="KW-1003">Cell membrane</keyword>
<keyword id="KW-0963">Cytoplasm</keyword>
<keyword id="KW-0449">Lipoprotein</keyword>
<keyword id="KW-0472">Membrane</keyword>
<keyword id="KW-1210">Necrosis</keyword>
<keyword id="KW-0564">Palmitate</keyword>
<keyword id="KW-1185">Reference proteome</keyword>
<keyword id="KW-0812">Transmembrane</keyword>
<keyword id="KW-1134">Transmembrane beta strand</keyword>
<dbReference type="EMBL" id="AK033603">
    <property type="protein sequence ID" value="BAC28384.1"/>
    <property type="molecule type" value="mRNA"/>
</dbReference>
<dbReference type="EMBL" id="BC113153">
    <property type="protein sequence ID" value="AAI13154.1"/>
    <property type="molecule type" value="mRNA"/>
</dbReference>
<dbReference type="EMBL" id="BC113155">
    <property type="protein sequence ID" value="AAI13156.1"/>
    <property type="molecule type" value="mRNA"/>
</dbReference>
<dbReference type="CCDS" id="CCDS37087.1"/>
<dbReference type="RefSeq" id="NP_001161746.1">
    <property type="nucleotide sequence ID" value="NM_001168274.1"/>
</dbReference>
<dbReference type="RefSeq" id="NP_808580.2">
    <property type="nucleotide sequence ID" value="NM_177912.4"/>
</dbReference>
<dbReference type="RefSeq" id="XP_006521159.1">
    <property type="nucleotide sequence ID" value="XM_006521096.4"/>
</dbReference>
<dbReference type="RefSeq" id="XP_006521160.1">
    <property type="nucleotide sequence ID" value="XM_006521097.4"/>
</dbReference>
<dbReference type="RefSeq" id="XP_006521161.1">
    <property type="nucleotide sequence ID" value="XM_006521098.4"/>
</dbReference>
<dbReference type="RefSeq" id="XP_011243969.1">
    <property type="nucleotide sequence ID" value="XM_011245667.3"/>
</dbReference>
<dbReference type="RefSeq" id="XP_011243970.1">
    <property type="nucleotide sequence ID" value="XM_011245668.3"/>
</dbReference>
<dbReference type="RefSeq" id="XP_011243971.1">
    <property type="nucleotide sequence ID" value="XM_011245669.3"/>
</dbReference>
<dbReference type="RefSeq" id="XP_011243972.1">
    <property type="nucleotide sequence ID" value="XM_011245670.3"/>
</dbReference>
<dbReference type="RefSeq" id="XP_011243973.1">
    <property type="nucleotide sequence ID" value="XM_011245671.3"/>
</dbReference>
<dbReference type="RefSeq" id="XP_011243974.1">
    <property type="nucleotide sequence ID" value="XM_011245672.3"/>
</dbReference>
<dbReference type="RefSeq" id="XP_011243975.1">
    <property type="nucleotide sequence ID" value="XM_011245673.3"/>
</dbReference>
<dbReference type="RefSeq" id="XP_011243976.1">
    <property type="nucleotide sequence ID" value="XM_011245674.3"/>
</dbReference>
<dbReference type="RefSeq" id="XP_011243977.1">
    <property type="nucleotide sequence ID" value="XM_011245675.3"/>
</dbReference>
<dbReference type="RefSeq" id="XP_011243978.1">
    <property type="nucleotide sequence ID" value="XM_011245676.3"/>
</dbReference>
<dbReference type="RefSeq" id="XP_011243979.1">
    <property type="nucleotide sequence ID" value="XM_011245677.3"/>
</dbReference>
<dbReference type="RefSeq" id="XP_030104472.1">
    <property type="nucleotide sequence ID" value="XM_030248612.1"/>
</dbReference>
<dbReference type="SMR" id="Q2KHK6"/>
<dbReference type="FunCoup" id="Q2KHK6">
    <property type="interactions" value="135"/>
</dbReference>
<dbReference type="STRING" id="10090.ENSMUSP00000140487"/>
<dbReference type="SwissPalm" id="Q2KHK6"/>
<dbReference type="PaxDb" id="10090-ENSMUSP00000140487"/>
<dbReference type="ProteomicsDB" id="271173"/>
<dbReference type="DNASU" id="331063"/>
<dbReference type="Ensembl" id="ENSMUST00000089900.10">
    <property type="protein sequence ID" value="ENSMUSP00000087344.4"/>
    <property type="gene ID" value="ENSMUSG00000056293.13"/>
</dbReference>
<dbReference type="Ensembl" id="ENSMUST00000188404.7">
    <property type="protein sequence ID" value="ENSMUSP00000141066.2"/>
    <property type="gene ID" value="ENSMUSG00000056293.13"/>
</dbReference>
<dbReference type="Ensembl" id="ENSMUST00000188691.2">
    <property type="protein sequence ID" value="ENSMUSP00000140487.2"/>
    <property type="gene ID" value="ENSMUSG00000056293.13"/>
</dbReference>
<dbReference type="GeneID" id="331063"/>
<dbReference type="KEGG" id="mmu:331063"/>
<dbReference type="UCSC" id="uc007vyu.1">
    <property type="organism name" value="mouse"/>
</dbReference>
<dbReference type="AGR" id="MGI:2146102"/>
<dbReference type="CTD" id="331063"/>
<dbReference type="MGI" id="MGI:2146102">
    <property type="gene designation" value="Gsdmc2"/>
</dbReference>
<dbReference type="VEuPathDB" id="HostDB:ENSMUSG00000056293"/>
<dbReference type="eggNOG" id="ENOG502S0IQ">
    <property type="taxonomic scope" value="Eukaryota"/>
</dbReference>
<dbReference type="GeneTree" id="ENSGT00950000183140"/>
<dbReference type="HOGENOM" id="CLU_040752_2_0_1"/>
<dbReference type="InParanoid" id="Q2KHK6"/>
<dbReference type="OMA" id="HETWPEL"/>
<dbReference type="OrthoDB" id="9836623at2759"/>
<dbReference type="PhylomeDB" id="Q2KHK6"/>
<dbReference type="TreeFam" id="TF331886"/>
<dbReference type="BioGRID-ORCS" id="331063">
    <property type="hits" value="0 hits in 45 CRISPR screens"/>
</dbReference>
<dbReference type="PRO" id="PR:Q2KHK6"/>
<dbReference type="Proteomes" id="UP000000589">
    <property type="component" value="Chromosome 15"/>
</dbReference>
<dbReference type="RNAct" id="Q2KHK6">
    <property type="molecule type" value="protein"/>
</dbReference>
<dbReference type="Bgee" id="ENSMUSG00000056293">
    <property type="expression patterns" value="Expressed in renal medulla collecting duct and 52 other cell types or tissues"/>
</dbReference>
<dbReference type="GO" id="GO:0005829">
    <property type="term" value="C:cytosol"/>
    <property type="evidence" value="ECO:0007669"/>
    <property type="project" value="UniProtKB-SubCell"/>
</dbReference>
<dbReference type="GO" id="GO:0005886">
    <property type="term" value="C:plasma membrane"/>
    <property type="evidence" value="ECO:0007669"/>
    <property type="project" value="UniProtKB-SubCell"/>
</dbReference>
<dbReference type="GO" id="GO:0060576">
    <property type="term" value="P:intestinal epithelial cell development"/>
    <property type="evidence" value="ECO:0000270"/>
    <property type="project" value="UniProtKB"/>
</dbReference>
<dbReference type="GO" id="GO:0012501">
    <property type="term" value="P:programmed cell death"/>
    <property type="evidence" value="ECO:0007669"/>
    <property type="project" value="UniProtKB-KW"/>
</dbReference>
<dbReference type="InterPro" id="IPR007677">
    <property type="entry name" value="Gasdermin"/>
</dbReference>
<dbReference type="InterPro" id="IPR040460">
    <property type="entry name" value="Gasdermin_pore"/>
</dbReference>
<dbReference type="InterPro" id="IPR041263">
    <property type="entry name" value="Gasdermin_PUB"/>
</dbReference>
<dbReference type="PANTHER" id="PTHR16399">
    <property type="entry name" value="GASDERMIN"/>
    <property type="match status" value="1"/>
</dbReference>
<dbReference type="PANTHER" id="PTHR16399:SF21">
    <property type="entry name" value="GASDERMIN-C"/>
    <property type="match status" value="1"/>
</dbReference>
<dbReference type="Pfam" id="PF04598">
    <property type="entry name" value="Gasdermin"/>
    <property type="match status" value="1"/>
</dbReference>
<dbReference type="Pfam" id="PF17708">
    <property type="entry name" value="Gasdermin_C"/>
    <property type="match status" value="1"/>
</dbReference>
<gene>
    <name evidence="4 9" type="primary">Gsdmc2</name>
</gene>
<sequence length="480" mass="53952">MGYSFDRASKDVVKKLQGRDLRPVECLSDATKFRLFHILQETPRSGWETEDIPVGFTLLDLLEPNFPVPEPEVSAPKPFIHVQSTDLEANLNVADIARGGVGYVGYGGYNIEVQSTSIPNPKLEILQNRKLLDNLPTFMKFCRMERKNLYVVTEAYEVSKDTMLTGLSSVNLSVKGFFKQLFKVRGKAGRSEKYSIPIPKGSVLAYKKQQLVIENNTCVILPSATKKKMTFPGTPKYASASEPTEIYRTELQGLWINDIVPIGRIQEPAHLDFMCLQNEVYKQTEQLAELSKGVQEVVLSSILSMLYEGDRKVLYDLMNMLELNQLGHMDGPGGKILDELRKDSSNPCVDLKDLILYLLQALMVLSDSQLNLLAQSVEMGILPHQVELVKSILQPNFKYPWNIPFTLQPQLLAPLQGEGLAITYELLEECGLKMELNNPRSTWDLEAKMPLSALYGSLSFLQQLRKANSSSKPSLRPGYI</sequence>
<reference evidence="8" key="1">
    <citation type="journal article" date="2005" name="Science">
        <title>The transcriptional landscape of the mammalian genome.</title>
        <authorList>
            <person name="Carninci P."/>
            <person name="Kasukawa T."/>
            <person name="Katayama S."/>
            <person name="Gough J."/>
            <person name="Frith M.C."/>
            <person name="Maeda N."/>
            <person name="Oyama R."/>
            <person name="Ravasi T."/>
            <person name="Lenhard B."/>
            <person name="Wells C."/>
            <person name="Kodzius R."/>
            <person name="Shimokawa K."/>
            <person name="Bajic V.B."/>
            <person name="Brenner S.E."/>
            <person name="Batalov S."/>
            <person name="Forrest A.R."/>
            <person name="Zavolan M."/>
            <person name="Davis M.J."/>
            <person name="Wilming L.G."/>
            <person name="Aidinis V."/>
            <person name="Allen J.E."/>
            <person name="Ambesi-Impiombato A."/>
            <person name="Apweiler R."/>
            <person name="Aturaliya R.N."/>
            <person name="Bailey T.L."/>
            <person name="Bansal M."/>
            <person name="Baxter L."/>
            <person name="Beisel K.W."/>
            <person name="Bersano T."/>
            <person name="Bono H."/>
            <person name="Chalk A.M."/>
            <person name="Chiu K.P."/>
            <person name="Choudhary V."/>
            <person name="Christoffels A."/>
            <person name="Clutterbuck D.R."/>
            <person name="Crowe M.L."/>
            <person name="Dalla E."/>
            <person name="Dalrymple B.P."/>
            <person name="de Bono B."/>
            <person name="Della Gatta G."/>
            <person name="di Bernardo D."/>
            <person name="Down T."/>
            <person name="Engstrom P."/>
            <person name="Fagiolini M."/>
            <person name="Faulkner G."/>
            <person name="Fletcher C.F."/>
            <person name="Fukushima T."/>
            <person name="Furuno M."/>
            <person name="Futaki S."/>
            <person name="Gariboldi M."/>
            <person name="Georgii-Hemming P."/>
            <person name="Gingeras T.R."/>
            <person name="Gojobori T."/>
            <person name="Green R.E."/>
            <person name="Gustincich S."/>
            <person name="Harbers M."/>
            <person name="Hayashi Y."/>
            <person name="Hensch T.K."/>
            <person name="Hirokawa N."/>
            <person name="Hill D."/>
            <person name="Huminiecki L."/>
            <person name="Iacono M."/>
            <person name="Ikeo K."/>
            <person name="Iwama A."/>
            <person name="Ishikawa T."/>
            <person name="Jakt M."/>
            <person name="Kanapin A."/>
            <person name="Katoh M."/>
            <person name="Kawasawa Y."/>
            <person name="Kelso J."/>
            <person name="Kitamura H."/>
            <person name="Kitano H."/>
            <person name="Kollias G."/>
            <person name="Krishnan S.P."/>
            <person name="Kruger A."/>
            <person name="Kummerfeld S.K."/>
            <person name="Kurochkin I.V."/>
            <person name="Lareau L.F."/>
            <person name="Lazarevic D."/>
            <person name="Lipovich L."/>
            <person name="Liu J."/>
            <person name="Liuni S."/>
            <person name="McWilliam S."/>
            <person name="Madan Babu M."/>
            <person name="Madera M."/>
            <person name="Marchionni L."/>
            <person name="Matsuda H."/>
            <person name="Matsuzawa S."/>
            <person name="Miki H."/>
            <person name="Mignone F."/>
            <person name="Miyake S."/>
            <person name="Morris K."/>
            <person name="Mottagui-Tabar S."/>
            <person name="Mulder N."/>
            <person name="Nakano N."/>
            <person name="Nakauchi H."/>
            <person name="Ng P."/>
            <person name="Nilsson R."/>
            <person name="Nishiguchi S."/>
            <person name="Nishikawa S."/>
            <person name="Nori F."/>
            <person name="Ohara O."/>
            <person name="Okazaki Y."/>
            <person name="Orlando V."/>
            <person name="Pang K.C."/>
            <person name="Pavan W.J."/>
            <person name="Pavesi G."/>
            <person name="Pesole G."/>
            <person name="Petrovsky N."/>
            <person name="Piazza S."/>
            <person name="Reed J."/>
            <person name="Reid J.F."/>
            <person name="Ring B.Z."/>
            <person name="Ringwald M."/>
            <person name="Rost B."/>
            <person name="Ruan Y."/>
            <person name="Salzberg S.L."/>
            <person name="Sandelin A."/>
            <person name="Schneider C."/>
            <person name="Schoenbach C."/>
            <person name="Sekiguchi K."/>
            <person name="Semple C.A."/>
            <person name="Seno S."/>
            <person name="Sessa L."/>
            <person name="Sheng Y."/>
            <person name="Shibata Y."/>
            <person name="Shimada H."/>
            <person name="Shimada K."/>
            <person name="Silva D."/>
            <person name="Sinclair B."/>
            <person name="Sperling S."/>
            <person name="Stupka E."/>
            <person name="Sugiura K."/>
            <person name="Sultana R."/>
            <person name="Takenaka Y."/>
            <person name="Taki K."/>
            <person name="Tammoja K."/>
            <person name="Tan S.L."/>
            <person name="Tang S."/>
            <person name="Taylor M.S."/>
            <person name="Tegner J."/>
            <person name="Teichmann S.A."/>
            <person name="Ueda H.R."/>
            <person name="van Nimwegen E."/>
            <person name="Verardo R."/>
            <person name="Wei C.L."/>
            <person name="Yagi K."/>
            <person name="Yamanishi H."/>
            <person name="Zabarovsky E."/>
            <person name="Zhu S."/>
            <person name="Zimmer A."/>
            <person name="Hide W."/>
            <person name="Bult C."/>
            <person name="Grimmond S.M."/>
            <person name="Teasdale R.D."/>
            <person name="Liu E.T."/>
            <person name="Brusic V."/>
            <person name="Quackenbush J."/>
            <person name="Wahlestedt C."/>
            <person name="Mattick J.S."/>
            <person name="Hume D.A."/>
            <person name="Kai C."/>
            <person name="Sasaki D."/>
            <person name="Tomaru Y."/>
            <person name="Fukuda S."/>
            <person name="Kanamori-Katayama M."/>
            <person name="Suzuki M."/>
            <person name="Aoki J."/>
            <person name="Arakawa T."/>
            <person name="Iida J."/>
            <person name="Imamura K."/>
            <person name="Itoh M."/>
            <person name="Kato T."/>
            <person name="Kawaji H."/>
            <person name="Kawagashira N."/>
            <person name="Kawashima T."/>
            <person name="Kojima M."/>
            <person name="Kondo S."/>
            <person name="Konno H."/>
            <person name="Nakano K."/>
            <person name="Ninomiya N."/>
            <person name="Nishio T."/>
            <person name="Okada M."/>
            <person name="Plessy C."/>
            <person name="Shibata K."/>
            <person name="Shiraki T."/>
            <person name="Suzuki S."/>
            <person name="Tagami M."/>
            <person name="Waki K."/>
            <person name="Watahiki A."/>
            <person name="Okamura-Oho Y."/>
            <person name="Suzuki H."/>
            <person name="Kawai J."/>
            <person name="Hayashizaki Y."/>
        </authorList>
    </citation>
    <scope>NUCLEOTIDE SEQUENCE [LARGE SCALE MRNA]</scope>
    <source>
        <strain evidence="8">C57BL/6J</strain>
        <tissue evidence="8">Cecum</tissue>
    </source>
</reference>
<reference evidence="7" key="2">
    <citation type="journal article" date="2004" name="Genome Res.">
        <title>The status, quality, and expansion of the NIH full-length cDNA project: the Mammalian Gene Collection (MGC).</title>
        <authorList>
            <consortium name="The MGC Project Team"/>
        </authorList>
    </citation>
    <scope>NUCLEOTIDE SEQUENCE [LARGE SCALE MRNA]</scope>
</reference>
<reference evidence="5" key="3">
    <citation type="journal article" date="2007" name="Genomics">
        <title>Members of a novel gene family, Gsdm, are expressed exclusively in the epithelium of the skin and gastrointestinal tract in a highly tissue-specific manner.</title>
        <authorList>
            <person name="Tamura M."/>
            <person name="Tanaka S."/>
            <person name="Fujii T."/>
            <person name="Aoki A."/>
            <person name="Komiyama H."/>
            <person name="Ezawa K."/>
            <person name="Sumiyama K."/>
            <person name="Sagai T."/>
            <person name="Shiroishi T."/>
        </authorList>
    </citation>
    <scope>IDENTIFICATION</scope>
</reference>
<reference key="4">
    <citation type="journal article" date="2021" name="Proc. Natl. Acad. Sci. U.S.A.">
        <title>Up-regulation of gasdermin C in mouse small intestine is associated with lytic cell death in enterocytes in worm-induced type 2 immunity.</title>
        <authorList>
            <person name="Xi R."/>
            <person name="Montague J."/>
            <person name="Lin X."/>
            <person name="Lu C."/>
            <person name="Lei W."/>
            <person name="Tanaka K."/>
            <person name="Zhang Y.V."/>
            <person name="Xu X."/>
            <person name="Zheng X."/>
            <person name="Zhou X."/>
            <person name="Urban J.F. Jr."/>
            <person name="Iwatsuki K."/>
            <person name="Margolskee R.F."/>
            <person name="Matsumoto I."/>
            <person name="Tizzano M."/>
            <person name="Li J."/>
            <person name="Jiang P."/>
        </authorList>
    </citation>
    <scope>FUNCTION</scope>
    <scope>ACTIVITY REGULATION</scope>
    <scope>PROTEOLYTIC CLEAVAGE</scope>
    <scope>INDUCTION</scope>
</reference>
<protein>
    <recommendedName>
        <fullName evidence="4">Gasdermin-C2</fullName>
    </recommendedName>
    <component>
        <recommendedName>
            <fullName evidence="5">Gasdermin-C2, N-terminal</fullName>
            <shortName evidence="5">GSDMC2-NT</shortName>
        </recommendedName>
    </component>
    <component>
        <recommendedName>
            <fullName evidence="5">Gasdermin-C2, C-terminal</fullName>
            <shortName evidence="5">GSDMC2-CT</shortName>
        </recommendedName>
    </component>
</protein>
<name>GSDC2_MOUSE</name>
<feature type="chain" id="PRO_0000347331" description="Gasdermin-C2">
    <location>
        <begin position="1"/>
        <end position="480"/>
    </location>
</feature>
<feature type="chain" id="PRO_0000451678" description="Gasdermin-C2, N-terminal" evidence="5">
    <location>
        <begin position="1"/>
        <end status="unknown"/>
    </location>
</feature>
<feature type="chain" id="PRO_0000451679" description="Gasdermin-C2, C-terminal" evidence="5">
    <location>
        <begin status="unknown"/>
        <end position="480"/>
    </location>
</feature>
<feature type="region of interest" description="Triggers pyroptosis" evidence="2">
    <location>
        <begin position="1"/>
        <end position="226"/>
    </location>
</feature>
<feature type="sequence conflict" description="In Ref. 2; AAI13154." evidence="5" ref="2">
    <original>N</original>
    <variation>K</variation>
    <location>
        <position position="134"/>
    </location>
</feature>
<feature type="sequence conflict" description="In Ref. 1; BAC28384." evidence="5" ref="1">
    <original>Q</original>
    <variation>H</variation>
    <location>
        <position position="180"/>
    </location>
</feature>
<feature type="sequence conflict" description="In Ref. 2; AAI13154." evidence="5" ref="2">
    <original>M</original>
    <variation>L</variation>
    <location>
        <position position="363"/>
    </location>
</feature>
<feature type="sequence conflict" description="In Ref. 2; AAI13154." evidence="5" ref="2">
    <original>S</original>
    <variation>T</variation>
    <location>
        <position position="368"/>
    </location>
</feature>
<feature type="sequence conflict" description="In Ref. 2; AAI13154." evidence="5" ref="2">
    <original>N</original>
    <variation>C</variation>
    <location>
        <position position="371"/>
    </location>
</feature>
<feature type="sequence conflict" description="In Ref. 2; AAI13154." evidence="5" ref="2">
    <original>E</original>
    <variation>K</variation>
    <location>
        <position position="378"/>
    </location>
</feature>
<feature type="sequence conflict" description="In Ref. 2; AAI13154." evidence="5" ref="2">
    <original>I</original>
    <variation>L</variation>
    <location>
        <position position="381"/>
    </location>
</feature>
<feature type="sequence conflict" description="In Ref. 2; AAI13154." evidence="5" ref="2">
    <original>P</original>
    <variation>T</variation>
    <location>
        <position position="395"/>
    </location>
</feature>
<feature type="sequence conflict" description="In Ref. 2; AAI13154." evidence="5" ref="2">
    <original>PWNI</original>
    <variation>SSNT</variation>
    <location>
        <begin position="400"/>
        <end position="403"/>
    </location>
</feature>
<feature type="sequence conflict" description="In Ref. 2; AAI13156." evidence="5" ref="2">
    <original>L</original>
    <variation>V</variation>
    <location>
        <position position="407"/>
    </location>
</feature>
<feature type="sequence conflict" description="In Ref. 2; AAI13154." evidence="5" ref="2">
    <original>R</original>
    <variation>Q</variation>
    <location>
        <position position="465"/>
    </location>
</feature>
<feature type="sequence conflict" description="In Ref. 2; AAI13154." evidence="5" ref="2">
    <original>R</original>
    <variation>S</variation>
    <location>
        <position position="476"/>
    </location>
</feature>
<comment type="function">
    <molecule>Gasdermin-C2</molecule>
    <text evidence="3">This form constitutes the precursor of the pore-forming protein: upon cleavage, the released N-terminal moiety (Gasdermin-C2, N-terminal) binds to membranes and forms pores, triggering pyroptosis.</text>
</comment>
<comment type="function">
    <molecule>Gasdermin-C2, N-terminal</molecule>
    <text evidence="2 3">Pore-forming protein that causes membrane permeabilization and pyroptosis in response to type-2 immunity (PubMed:34290141). Produced by the cleavage of gasdermin-C2 in response to type-2 immunity following worm infection (PubMed:34290141). After cleavage, moves to the plasma membrane where it strongly binds to membrane inner leaflet lipids (By similarity). Homooligomerizes within the membrane and forms pores of 10-15 nanometers (nm) of inner diameter, triggering pyroptosis and lytic cell death in enterocytes (PubMed:34290141).</text>
</comment>
<comment type="activity regulation">
    <molecule>Gasdermin-C2</molecule>
    <text evidence="2 3">The full-length protein before cleavage is inactive: intramolecular interactions between N- and C-terminal domains mediate autoinhibition in the absence of activation signal (By similarity). The intrinsic pyroptosis-inducing activity is carried by the released N-terminal moiety (Gasdermin-C2, N-terminal) following cleavage by caspase CASP8 in response to type-2 immunity following worm infection (PubMed:34290141).</text>
</comment>
<comment type="subunit">
    <molecule>Gasdermin-C2, N-terminal</molecule>
    <text evidence="1">Homooligomer; homooligomeric ring-shaped pore complex containing 27-28 subunits when inserted in the membrane.</text>
</comment>
<comment type="subcellular location">
    <molecule>Gasdermin-C2</molecule>
    <subcellularLocation>
        <location evidence="2">Cytoplasm</location>
        <location evidence="2">Cytosol</location>
    </subcellularLocation>
</comment>
<comment type="subcellular location">
    <molecule>Gasdermin-C2, N-terminal</molecule>
    <subcellularLocation>
        <location evidence="1">Cell membrane</location>
        <topology evidence="1">Multi-pass membrane protein</topology>
    </subcellularLocation>
</comment>
<comment type="induction">
    <text evidence="3">By type 2 cytokines in response to type-2 immunity following worm infection.</text>
</comment>
<comment type="domain">
    <text evidence="1">Intramolecular interactions between N- and C-terminal domains are important for autoinhibition in the absence of activation signal. The intrinsic pyroptosis-inducing activity is carried by the N-terminal domain.</text>
</comment>
<comment type="PTM">
    <text evidence="6">Cleavage by CASP8 relieves autoinhibition by releasing the N-terminal moiety (Gasdermin-C2, N-terminal) that initiates pyroptosis (PubMed:34290141).</text>
</comment>
<comment type="PTM">
    <text evidence="2">Palmitoylated.</text>
</comment>
<comment type="similarity">
    <text evidence="5">Belongs to the gasdermin family.</text>
</comment>
<organism>
    <name type="scientific">Mus musculus</name>
    <name type="common">Mouse</name>
    <dbReference type="NCBI Taxonomy" id="10090"/>
    <lineage>
        <taxon>Eukaryota</taxon>
        <taxon>Metazoa</taxon>
        <taxon>Chordata</taxon>
        <taxon>Craniata</taxon>
        <taxon>Vertebrata</taxon>
        <taxon>Euteleostomi</taxon>
        <taxon>Mammalia</taxon>
        <taxon>Eutheria</taxon>
        <taxon>Euarchontoglires</taxon>
        <taxon>Glires</taxon>
        <taxon>Rodentia</taxon>
        <taxon>Myomorpha</taxon>
        <taxon>Muroidea</taxon>
        <taxon>Muridae</taxon>
        <taxon>Murinae</taxon>
        <taxon>Mus</taxon>
        <taxon>Mus</taxon>
    </lineage>
</organism>
<proteinExistence type="evidence at protein level"/>
<evidence type="ECO:0000250" key="1">
    <source>
        <dbReference type="UniProtKB" id="Q5Y4Y6"/>
    </source>
</evidence>
<evidence type="ECO:0000250" key="2">
    <source>
        <dbReference type="UniProtKB" id="Q9BYG8"/>
    </source>
</evidence>
<evidence type="ECO:0000269" key="3">
    <source>
    </source>
</evidence>
<evidence type="ECO:0000303" key="4">
    <source>
    </source>
</evidence>
<evidence type="ECO:0000305" key="5"/>
<evidence type="ECO:0000305" key="6">
    <source>
    </source>
</evidence>
<evidence type="ECO:0000312" key="7">
    <source>
        <dbReference type="EMBL" id="AAI13156.1"/>
    </source>
</evidence>
<evidence type="ECO:0000312" key="8">
    <source>
        <dbReference type="EMBL" id="BAC28384.1"/>
    </source>
</evidence>
<evidence type="ECO:0000312" key="9">
    <source>
        <dbReference type="MGI" id="MGI:2146102"/>
    </source>
</evidence>